<proteinExistence type="evidence at protein level"/>
<keyword id="KW-0176">Collagen</keyword>
<keyword id="KW-0903">Direct protein sequencing</keyword>
<keyword id="KW-0272">Extracellular matrix</keyword>
<keyword id="KW-0964">Secreted</keyword>
<name>CO1A2_EPIAE</name>
<evidence type="ECO:0000255" key="1">
    <source>
        <dbReference type="PROSITE-ProRule" id="PRU00793"/>
    </source>
</evidence>
<evidence type="ECO:0000256" key="2">
    <source>
        <dbReference type="SAM" id="MobiDB-lite"/>
    </source>
</evidence>
<evidence type="ECO:0000303" key="3">
    <source ref="1"/>
</evidence>
<evidence type="ECO:0000305" key="4"/>
<protein>
    <recommendedName>
        <fullName evidence="4">Collagen alpha-2(I) chain</fullName>
        <shortName evidence="4">col1a2</shortName>
    </recommendedName>
    <alternativeName>
        <fullName evidence="4">Alpha-2 type I collagen</fullName>
    </alternativeName>
</protein>
<reference evidence="4" key="1">
    <citation type="submission" date="2023-05" db="UniProtKB">
        <title>Grouping groupers in the Mediterranean: ecological baselines revealed by ancient proteins.</title>
        <authorList>
            <person name="Winter R.M."/>
            <person name="de Kock W."/>
            <person name="Mackie M."/>
            <person name="Ramsoe M."/>
            <person name="Desidera E."/>
            <person name="Collins M."/>
            <person name="Guidetti P."/>
            <person name="Presslee S."/>
            <person name="Munoz-Alegre M."/>
            <person name="Oueslati T."/>
            <person name="Morales-Muniz A."/>
            <person name="Michailidis D."/>
            <person name="van den Hurk Y."/>
            <person name="Cakirlar C."/>
        </authorList>
    </citation>
    <scope>PROTEIN SEQUENCE</scope>
    <scope>IDENTIFICATION BY MASS SPECTROMETRY</scope>
    <source>
        <tissue evidence="3">Bone</tissue>
    </source>
</reference>
<accession>C0HM91</accession>
<sequence>APDPGPGPMGMMGARGPPGPPGPPGAQGHTGHGPPGPPGKSGEDGNNGRPGKPGDRGAPGPQGARGFPGTPGLPGMKGHRGYTGLDGRKGEPGGAGAKGEPGAHGAAGSPGLAGSRGRAGPAGPAGARGADGNAGPAGPAGPLGAAGPPGFPGGPGPKGELGPAGATGPSGAQGSRGEPGPNGAVGPVGPPGNPGNNGLNGAKGAAGTPGVAGAPGFPGPRGGPGPQGPQGAAGQRGLAGDPGTQGVKGDGGPKGEPGNSGPQGPPGPQGEEGKRGPTGELGATGPAGNRSGPLGMPGARGATGAAGPRGPPGDAGRAGESGPAGLRGLPGSPGSSGPPGKEGAAGPAGQDGRGGPPGPTGPRGPSGEAGKPGDKGATGPTGLRGAPGPDGNNGATGATGPAGGPGEKGEQGAAGAPGFQGLPGPAGGAGEAGKPGDRGLPGDQGVSGPAGAKGERGNPGAAGASGPQGPLGPRGPAGAPGTDGGKGEPGAAGAAGGPGHQGPGGMPGERGAAGAPGGKGEKGEAGHRGPDGNAGRDGSRGMPGPAGPPGPTGANGDKGESGSFGPAGPAGARGASGERGEVGPAGAPGFAGPPGADGQTGARGERGPSGGKGESGPAGPAGPAGQSGPPGASGPAGPTGARGDNGPPGLTGFPGAAGRVGAAGPAGLVGPPGSAGPAGKDGPRGLRGDPGPSGPSGDQGMVGPPGPSGEKGPSGPAGXPGXPGTSGPLGLQGFVGLPGARGDRGSPGGAGGVGEPGRVGPAGPAGARGNLGLPGMTGPQGEAGREGNPGNDGPPGRPGAPGFKGDRGNRGESGPGGAAGAVGPAGARGAAGPSGPRGEKGVAGEKGERGLRGHAGLQGMPGPSGPSGDTGSAGPNGPAGPRGPAGPHGPPGKDGRAGGHGTLGSPGARGPPGYVGPAGPPGSPGLPGPPGPAGGGYDVSGYDEYRAAKDYEVDATLKSLNTQLENLLTPEGSRKNPARLSHPEWSSGFYPNQGCSNDALKETCLHAHPGSLARAVVVQGSNDVELRFTFSVLEDGCTRTNKPSRLPLLDLAPLDLGGADQEFGLDLGPVCFK</sequence>
<dbReference type="GO" id="GO:0005581">
    <property type="term" value="C:collagen trimer"/>
    <property type="evidence" value="ECO:0007669"/>
    <property type="project" value="UniProtKB-KW"/>
</dbReference>
<dbReference type="GO" id="GO:0031012">
    <property type="term" value="C:extracellular matrix"/>
    <property type="evidence" value="ECO:0007669"/>
    <property type="project" value="TreeGrafter"/>
</dbReference>
<dbReference type="GO" id="GO:0005615">
    <property type="term" value="C:extracellular space"/>
    <property type="evidence" value="ECO:0007669"/>
    <property type="project" value="TreeGrafter"/>
</dbReference>
<dbReference type="GO" id="GO:0005201">
    <property type="term" value="F:extracellular matrix structural constituent"/>
    <property type="evidence" value="ECO:0007669"/>
    <property type="project" value="InterPro"/>
</dbReference>
<dbReference type="Gene3D" id="2.60.120.1000">
    <property type="match status" value="2"/>
</dbReference>
<dbReference type="InterPro" id="IPR008160">
    <property type="entry name" value="Collagen"/>
</dbReference>
<dbReference type="InterPro" id="IPR050149">
    <property type="entry name" value="Collagen_superfamily"/>
</dbReference>
<dbReference type="InterPro" id="IPR000885">
    <property type="entry name" value="Fib_collagen_C"/>
</dbReference>
<dbReference type="PANTHER" id="PTHR24023">
    <property type="entry name" value="COLLAGEN ALPHA"/>
    <property type="match status" value="1"/>
</dbReference>
<dbReference type="PANTHER" id="PTHR24023:SF1082">
    <property type="entry name" value="COLLAGEN TRIPLE HELIX REPEAT"/>
    <property type="match status" value="1"/>
</dbReference>
<dbReference type="Pfam" id="PF01410">
    <property type="entry name" value="COLFI"/>
    <property type="match status" value="2"/>
</dbReference>
<dbReference type="Pfam" id="PF01391">
    <property type="entry name" value="Collagen"/>
    <property type="match status" value="5"/>
</dbReference>
<dbReference type="SMART" id="SM00038">
    <property type="entry name" value="COLFI"/>
    <property type="match status" value="1"/>
</dbReference>
<dbReference type="PROSITE" id="PS51461">
    <property type="entry name" value="NC1_FIB"/>
    <property type="match status" value="1"/>
</dbReference>
<comment type="subcellular location">
    <subcellularLocation>
        <location evidence="1">Secreted</location>
        <location evidence="1">Extracellular space</location>
        <location evidence="1">Extracellular matrix</location>
    </subcellularLocation>
</comment>
<comment type="similarity">
    <text evidence="1">Belongs to the fibrillar collagen family.</text>
</comment>
<organism evidence="3">
    <name type="scientific">Epinephelus aeneus</name>
    <name type="common">White grouper</name>
    <name type="synonym">Serranus aeneus</name>
    <dbReference type="NCBI Taxonomy" id="179536"/>
    <lineage>
        <taxon>Eukaryota</taxon>
        <taxon>Metazoa</taxon>
        <taxon>Chordata</taxon>
        <taxon>Craniata</taxon>
        <taxon>Vertebrata</taxon>
        <taxon>Euteleostomi</taxon>
        <taxon>Actinopterygii</taxon>
        <taxon>Neopterygii</taxon>
        <taxon>Teleostei</taxon>
        <taxon>Neoteleostei</taxon>
        <taxon>Acanthomorphata</taxon>
        <taxon>Eupercaria</taxon>
        <taxon>Perciformes</taxon>
        <taxon>Serranoidei</taxon>
        <taxon>Serranidae</taxon>
        <taxon>Epinephelinae</taxon>
        <taxon>Epinephelini</taxon>
        <taxon>Epinephelus</taxon>
    </lineage>
</organism>
<feature type="chain" id="PRO_0000459605" description="Collagen alpha-2(I) chain">
    <location>
        <begin position="1"/>
        <end position="1073"/>
    </location>
</feature>
<feature type="domain" description="Fibrillar collagen NC1" evidence="1">
    <location>
        <begin position="1039"/>
        <end position="1073"/>
    </location>
</feature>
<feature type="region of interest" description="Disordered" evidence="2">
    <location>
        <begin position="1"/>
        <end position="939"/>
    </location>
</feature>
<feature type="compositionally biased region" description="Low complexity" evidence="2">
    <location>
        <begin position="100"/>
        <end position="148"/>
    </location>
</feature>
<feature type="compositionally biased region" description="Low complexity" evidence="2">
    <location>
        <begin position="178"/>
        <end position="187"/>
    </location>
</feature>
<feature type="compositionally biased region" description="Low complexity" evidence="2">
    <location>
        <begin position="194"/>
        <end position="215"/>
    </location>
</feature>
<feature type="compositionally biased region" description="Pro residues" evidence="2">
    <location>
        <begin position="217"/>
        <end position="227"/>
    </location>
</feature>
<feature type="compositionally biased region" description="Low complexity" evidence="2">
    <location>
        <begin position="229"/>
        <end position="239"/>
    </location>
</feature>
<feature type="compositionally biased region" description="Gly residues" evidence="2">
    <location>
        <begin position="246"/>
        <end position="255"/>
    </location>
</feature>
<feature type="compositionally biased region" description="Low complexity" evidence="2">
    <location>
        <begin position="296"/>
        <end position="315"/>
    </location>
</feature>
<feature type="compositionally biased region" description="Low complexity" evidence="2">
    <location>
        <begin position="321"/>
        <end position="348"/>
    </location>
</feature>
<feature type="compositionally biased region" description="Low complexity" evidence="2">
    <location>
        <begin position="386"/>
        <end position="399"/>
    </location>
</feature>
<feature type="compositionally biased region" description="Low complexity" evidence="2">
    <location>
        <begin position="411"/>
        <end position="423"/>
    </location>
</feature>
<feature type="compositionally biased region" description="Gly residues" evidence="2">
    <location>
        <begin position="424"/>
        <end position="433"/>
    </location>
</feature>
<feature type="compositionally biased region" description="Low complexity" evidence="2">
    <location>
        <begin position="458"/>
        <end position="468"/>
    </location>
</feature>
<feature type="compositionally biased region" description="Gly residues" evidence="2">
    <location>
        <begin position="481"/>
        <end position="508"/>
    </location>
</feature>
<feature type="compositionally biased region" description="Basic and acidic residues" evidence="2">
    <location>
        <begin position="519"/>
        <end position="530"/>
    </location>
</feature>
<feature type="compositionally biased region" description="Low complexity" evidence="2">
    <location>
        <begin position="561"/>
        <end position="575"/>
    </location>
</feature>
<feature type="compositionally biased region" description="Low complexity" evidence="2">
    <location>
        <begin position="584"/>
        <end position="597"/>
    </location>
</feature>
<feature type="compositionally biased region" description="Gly residues" evidence="2">
    <location>
        <begin position="607"/>
        <end position="616"/>
    </location>
</feature>
<feature type="compositionally biased region" description="Low complexity" evidence="2">
    <location>
        <begin position="617"/>
        <end position="642"/>
    </location>
</feature>
<feature type="compositionally biased region" description="Low complexity" evidence="2">
    <location>
        <begin position="653"/>
        <end position="680"/>
    </location>
</feature>
<feature type="compositionally biased region" description="Low complexity" evidence="2">
    <location>
        <begin position="708"/>
        <end position="729"/>
    </location>
</feature>
<feature type="compositionally biased region" description="Gly residues" evidence="2">
    <location>
        <begin position="745"/>
        <end position="757"/>
    </location>
</feature>
<feature type="compositionally biased region" description="Low complexity" evidence="2">
    <location>
        <begin position="758"/>
        <end position="774"/>
    </location>
</feature>
<feature type="compositionally biased region" description="Gly residues" evidence="2">
    <location>
        <begin position="811"/>
        <end position="820"/>
    </location>
</feature>
<feature type="compositionally biased region" description="Low complexity" evidence="2">
    <location>
        <begin position="821"/>
        <end position="836"/>
    </location>
</feature>
<feature type="compositionally biased region" description="Basic and acidic residues" evidence="2">
    <location>
        <begin position="837"/>
        <end position="851"/>
    </location>
</feature>
<feature type="compositionally biased region" description="Low complexity" evidence="2">
    <location>
        <begin position="857"/>
        <end position="876"/>
    </location>
</feature>
<feature type="compositionally biased region" description="Low complexity" evidence="2">
    <location>
        <begin position="906"/>
        <end position="917"/>
    </location>
</feature>
<feature type="compositionally biased region" description="Pro residues" evidence="2">
    <location>
        <begin position="918"/>
        <end position="932"/>
    </location>
</feature>
<feature type="non-consecutive residues" evidence="3">
    <location>
        <begin position="32"/>
        <end position="33"/>
    </location>
</feature>
<feature type="non-consecutive residues" evidence="3">
    <location>
        <begin position="116"/>
        <end position="117"/>
    </location>
</feature>
<feature type="non-consecutive residues" evidence="3">
    <location>
        <begin position="290"/>
        <end position="291"/>
    </location>
</feature>
<feature type="non-consecutive residues" evidence="3">
    <location>
        <begin position="363"/>
        <end position="364"/>
    </location>
</feature>
<feature type="non-consecutive residues" evidence="3">
    <location>
        <begin position="715"/>
        <end position="716"/>
    </location>
</feature>
<feature type="non-consecutive residues" evidence="3">
    <location>
        <begin position="768"/>
        <end position="769"/>
    </location>
</feature>
<feature type="non-consecutive residues" evidence="3">
    <location>
        <begin position="807"/>
        <end position="808"/>
    </location>
</feature>
<feature type="non-consecutive residues" evidence="3">
    <location>
        <begin position="849"/>
        <end position="850"/>
    </location>
</feature>
<feature type="non-consecutive residues" evidence="3">
    <location>
        <begin position="947"/>
        <end position="948"/>
    </location>
</feature>
<feature type="non-consecutive residues" evidence="3">
    <location>
        <begin position="979"/>
        <end position="980"/>
    </location>
</feature>
<feature type="non-consecutive residues" evidence="3">
    <location>
        <begin position="990"/>
        <end position="991"/>
    </location>
</feature>
<feature type="non-consecutive residues" evidence="3">
    <location>
        <begin position="1001"/>
        <end position="1002"/>
    </location>
</feature>
<feature type="non-consecutive residues" evidence="3">
    <location>
        <begin position="1014"/>
        <end position="1015"/>
    </location>
</feature>
<feature type="non-consecutive residues" evidence="3">
    <location>
        <begin position="1027"/>
        <end position="1028"/>
    </location>
</feature>
<feature type="non-consecutive residues" evidence="3">
    <location>
        <begin position="1039"/>
        <end position="1040"/>
    </location>
</feature>
<feature type="non-terminal residue" evidence="3">
    <location>
        <position position="1"/>
    </location>
</feature>